<proteinExistence type="evidence at protein level"/>
<protein>
    <recommendedName>
        <fullName evidence="1">Urease subunit beta</fullName>
        <ecNumber evidence="1">3.5.1.5</ecNumber>
    </recommendedName>
    <alternativeName>
        <fullName evidence="1">Urea amidohydrolase subunit beta</fullName>
    </alternativeName>
</protein>
<sequence>MIPGEIRVNAALGDIELNAGRETKTIQVANHGDRPVQVGSHYHFYEVNEALRFARKETLGFRLNIPAGMAVRFEPGQSRTVELVAFAGKREIYGFHGKVMGKLESEKK</sequence>
<comment type="catalytic activity">
    <reaction evidence="1 2 4">
        <text>urea + 2 H2O + H(+) = hydrogencarbonate + 2 NH4(+)</text>
        <dbReference type="Rhea" id="RHEA:20557"/>
        <dbReference type="ChEBI" id="CHEBI:15377"/>
        <dbReference type="ChEBI" id="CHEBI:15378"/>
        <dbReference type="ChEBI" id="CHEBI:16199"/>
        <dbReference type="ChEBI" id="CHEBI:17544"/>
        <dbReference type="ChEBI" id="CHEBI:28938"/>
        <dbReference type="EC" id="3.5.1.5"/>
    </reaction>
</comment>
<comment type="pathway">
    <text evidence="1">Nitrogen metabolism; urea degradation; CO(2) and NH(3) from urea (urease route): step 1/1.</text>
</comment>
<comment type="subunit">
    <text>Probable heterotrimer of UreA (gamma), UreB (beta) and UreC (alpha) subunits. Three heterotrimers associate to form the active enzyme. The trimeric urease interacts with an accessory complex composed of UreD, UreF and UreG, which is required for the assembly of the nickel containing metallocenter of UreC. The UreE protein may also play a direct role in nickel transfer to the urease apoprotein.</text>
</comment>
<comment type="subcellular location">
    <subcellularLocation>
        <location evidence="1">Cytoplasm</location>
    </subcellularLocation>
</comment>
<comment type="induction">
    <text evidence="3">By urea.</text>
</comment>
<comment type="similarity">
    <text evidence="1">Belongs to the urease beta subunit family.</text>
</comment>
<dbReference type="EC" id="3.5.1.5" evidence="1"/>
<dbReference type="EMBL" id="M31834">
    <property type="protein sequence ID" value="AAA25668.1"/>
    <property type="molecule type" value="Genomic_DNA"/>
</dbReference>
<dbReference type="EMBL" id="AM942759">
    <property type="protein sequence ID" value="CAR47183.1"/>
    <property type="molecule type" value="Genomic_DNA"/>
</dbReference>
<dbReference type="PIR" id="C43719">
    <property type="entry name" value="C43719"/>
</dbReference>
<dbReference type="RefSeq" id="WP_012368847.1">
    <property type="nucleotide sequence ID" value="NC_010554.1"/>
</dbReference>
<dbReference type="SMR" id="P17087"/>
<dbReference type="EnsemblBacteria" id="CAR47183">
    <property type="protein sequence ID" value="CAR47183"/>
    <property type="gene ID" value="PMI3684"/>
</dbReference>
<dbReference type="GeneID" id="6801197"/>
<dbReference type="KEGG" id="pmr:PMI3684"/>
<dbReference type="PATRIC" id="fig|529507.6.peg.3605"/>
<dbReference type="eggNOG" id="COG0832">
    <property type="taxonomic scope" value="Bacteria"/>
</dbReference>
<dbReference type="HOGENOM" id="CLU_129707_1_1_6"/>
<dbReference type="UniPathway" id="UPA00258">
    <property type="reaction ID" value="UER00370"/>
</dbReference>
<dbReference type="Proteomes" id="UP000008319">
    <property type="component" value="Chromosome"/>
</dbReference>
<dbReference type="GO" id="GO:0035550">
    <property type="term" value="C:urease complex"/>
    <property type="evidence" value="ECO:0007669"/>
    <property type="project" value="InterPro"/>
</dbReference>
<dbReference type="GO" id="GO:0009039">
    <property type="term" value="F:urease activity"/>
    <property type="evidence" value="ECO:0007669"/>
    <property type="project" value="UniProtKB-UniRule"/>
</dbReference>
<dbReference type="GO" id="GO:0043419">
    <property type="term" value="P:urea catabolic process"/>
    <property type="evidence" value="ECO:0007669"/>
    <property type="project" value="UniProtKB-UniRule"/>
</dbReference>
<dbReference type="CDD" id="cd00407">
    <property type="entry name" value="Urease_beta"/>
    <property type="match status" value="1"/>
</dbReference>
<dbReference type="FunFam" id="2.10.150.10:FF:000001">
    <property type="entry name" value="Urease subunit beta"/>
    <property type="match status" value="1"/>
</dbReference>
<dbReference type="Gene3D" id="2.10.150.10">
    <property type="entry name" value="Urease, beta subunit"/>
    <property type="match status" value="1"/>
</dbReference>
<dbReference type="HAMAP" id="MF_01954">
    <property type="entry name" value="Urease_beta"/>
    <property type="match status" value="1"/>
</dbReference>
<dbReference type="InterPro" id="IPR002019">
    <property type="entry name" value="Urease_beta-like"/>
</dbReference>
<dbReference type="InterPro" id="IPR036461">
    <property type="entry name" value="Urease_betasu_sf"/>
</dbReference>
<dbReference type="InterPro" id="IPR050069">
    <property type="entry name" value="Urease_subunit"/>
</dbReference>
<dbReference type="NCBIfam" id="NF009682">
    <property type="entry name" value="PRK13203.1"/>
    <property type="match status" value="1"/>
</dbReference>
<dbReference type="NCBIfam" id="TIGR00192">
    <property type="entry name" value="urease_beta"/>
    <property type="match status" value="1"/>
</dbReference>
<dbReference type="PANTHER" id="PTHR33569">
    <property type="entry name" value="UREASE"/>
    <property type="match status" value="1"/>
</dbReference>
<dbReference type="PANTHER" id="PTHR33569:SF1">
    <property type="entry name" value="UREASE"/>
    <property type="match status" value="1"/>
</dbReference>
<dbReference type="Pfam" id="PF00699">
    <property type="entry name" value="Urease_beta"/>
    <property type="match status" value="1"/>
</dbReference>
<dbReference type="SUPFAM" id="SSF51278">
    <property type="entry name" value="Urease, beta-subunit"/>
    <property type="match status" value="1"/>
</dbReference>
<evidence type="ECO:0000255" key="1">
    <source>
        <dbReference type="HAMAP-Rule" id="MF_01954"/>
    </source>
</evidence>
<evidence type="ECO:0000269" key="2">
    <source>
    </source>
</evidence>
<evidence type="ECO:0000269" key="3">
    <source>
    </source>
</evidence>
<evidence type="ECO:0000269" key="4">
    <source>
    </source>
</evidence>
<evidence type="ECO:0000305" key="5"/>
<name>URE2_PROMH</name>
<keyword id="KW-0963">Cytoplasm</keyword>
<keyword id="KW-0378">Hydrolase</keyword>
<keyword id="KW-1185">Reference proteome</keyword>
<keyword id="KW-0843">Virulence</keyword>
<reference key="1">
    <citation type="journal article" date="1989" name="J. Bacteriol.">
        <title>Proteus mirabilis urease: nucleotide sequence determination and comparison with jack bean urease.</title>
        <authorList>
            <person name="Jones B.D."/>
            <person name="Mobley H.L.T."/>
        </authorList>
    </citation>
    <scope>NUCLEOTIDE SEQUENCE [GENOMIC DNA]</scope>
</reference>
<reference key="2">
    <citation type="journal article" date="2008" name="J. Bacteriol.">
        <title>Complete genome sequence of uropathogenic Proteus mirabilis, a master of both adherence and motility.</title>
        <authorList>
            <person name="Pearson M.M."/>
            <person name="Sebaihia M."/>
            <person name="Churcher C."/>
            <person name="Quail M.A."/>
            <person name="Seshasayee A.S."/>
            <person name="Luscombe N.M."/>
            <person name="Abdellah Z."/>
            <person name="Arrosmith C."/>
            <person name="Atkin B."/>
            <person name="Chillingworth T."/>
            <person name="Hauser H."/>
            <person name="Jagels K."/>
            <person name="Moule S."/>
            <person name="Mungall K."/>
            <person name="Norbertczak H."/>
            <person name="Rabbinowitsch E."/>
            <person name="Walker D."/>
            <person name="Whithead S."/>
            <person name="Thomson N.R."/>
            <person name="Rather P.N."/>
            <person name="Parkhill J."/>
            <person name="Mobley H.L.T."/>
        </authorList>
    </citation>
    <scope>NUCLEOTIDE SEQUENCE [LARGE SCALE GENOMIC DNA]</scope>
    <source>
        <strain>HI4320</strain>
    </source>
</reference>
<reference key="3">
    <citation type="journal article" date="1990" name="Infect. Immun.">
        <title>Construction of a urease-negative mutant of Proteus mirabilis: analysis of virulence in a mouse model of ascending urinary tract infection.</title>
        <authorList>
            <person name="Jones B.D."/>
            <person name="Lockatell C.V."/>
            <person name="Johnson D.E."/>
            <person name="Warren J.W."/>
            <person name="Mobley H.L.T."/>
        </authorList>
    </citation>
    <scope>UREASE AS A VIRULENCE FACTOR</scope>
</reference>
<reference key="4">
    <citation type="journal article" date="1993" name="Infect. Immun.">
        <title>Proteus mirabilis urease: histidine 320 of UreC is essential for urea hydrolysis and nickel ion binding within the native enzyme.</title>
        <authorList>
            <person name="Sriwanthana B."/>
            <person name="Mobley H.L.T."/>
        </authorList>
    </citation>
    <scope>CATALYTIC ACTIVITY</scope>
</reference>
<reference key="5">
    <citation type="journal article" date="1993" name="J. Bacteriol.">
        <title>Proteus mirabilis urease: transcriptional regulation by UreR.</title>
        <authorList>
            <person name="Nicholson E.B."/>
            <person name="Concaugh E.A."/>
            <person name="Foxall P.A."/>
            <person name="Island M.D."/>
            <person name="Mobley H.L.T."/>
        </authorList>
    </citation>
    <scope>INDUCTION</scope>
</reference>
<reference key="6">
    <citation type="journal article" date="1995" name="J. Bacteriol.">
        <title>Proteus mirabilis urease: operon fusion and linker insertion analysis of ure gene organization, regulation, and function.</title>
        <authorList>
            <person name="Island M.D."/>
            <person name="Mobley H.L.T."/>
        </authorList>
    </citation>
    <scope>CATALYTIC ACTIVITY</scope>
    <scope>MUTAGENESIS OF MET-1</scope>
</reference>
<accession>P17087</accession>
<accession>B4EXN4</accession>
<feature type="chain" id="PRO_0000067582" description="Urease subunit beta">
    <location>
        <begin position="1"/>
        <end position="108"/>
    </location>
</feature>
<feature type="mutagenesis site" description="Reduces activity 2.5-fold." evidence="2">
    <original>M</original>
    <variation>MRRRI</variation>
    <location>
        <position position="1"/>
    </location>
</feature>
<feature type="sequence conflict" description="In Ref. 1; AAA25668." evidence="5" ref="1">
    <original>V</original>
    <variation>VD</variation>
    <location>
        <position position="81"/>
    </location>
</feature>
<gene>
    <name evidence="1" type="primary">ureB</name>
    <name type="ordered locus">PMI3684</name>
</gene>
<organism>
    <name type="scientific">Proteus mirabilis (strain HI4320)</name>
    <dbReference type="NCBI Taxonomy" id="529507"/>
    <lineage>
        <taxon>Bacteria</taxon>
        <taxon>Pseudomonadati</taxon>
        <taxon>Pseudomonadota</taxon>
        <taxon>Gammaproteobacteria</taxon>
        <taxon>Enterobacterales</taxon>
        <taxon>Morganellaceae</taxon>
        <taxon>Proteus</taxon>
    </lineage>
</organism>